<organism evidence="8">
    <name type="scientific">Yarrowia lipolytica (strain CLIB 122 / E 150)</name>
    <name type="common">Yeast</name>
    <name type="synonym">Candida lipolytica</name>
    <dbReference type="NCBI Taxonomy" id="284591"/>
    <lineage>
        <taxon>Eukaryota</taxon>
        <taxon>Fungi</taxon>
        <taxon>Dikarya</taxon>
        <taxon>Ascomycota</taxon>
        <taxon>Saccharomycotina</taxon>
        <taxon>Dipodascomycetes</taxon>
        <taxon>Dipodascales</taxon>
        <taxon>Dipodascales incertae sedis</taxon>
        <taxon>Yarrowia</taxon>
    </lineage>
</organism>
<sequence>MIFRRQLSTLIPPKVASPATLHGAPNAKRMADVVSFYKALPQGAAPALPKTANPFKLYYRKYFHPKSGKASGAPLLHLILGIFLFGYISDYQFHLKHHKNGAH</sequence>
<comment type="function">
    <text evidence="2 3">Mitochondrial membrane ATP synthase (F(1)F(0) ATP synthase or Complex V) produces ATP from ADP in the presence of a proton gradient across the membrane which is generated by electron transport complexes of the respiratory chain (PubMed:25759169). F-type ATP synthases consist of two structural domains, F(1) - containing the extramembraneous catalytic core, and F(0) - containing the membrane proton channel, linked together by a central stalk and a peripheral stalk (PubMed:27373333). During catalysis, ATP synthesis in the catalytic domain of F(1) is coupled via a rotary mechanism of the central stalk subunits to proton translocation (PubMed:27373333). Part of the complex F(0) domain (PubMed:27373333). Minor subunit located with subunit a/ATP6 in the membrane (PubMed:27373333).</text>
</comment>
<comment type="subunit">
    <text evidence="2 3">F-type ATP synthases have 2 components, the catalytic core F(1) and the membrane-embedded component F(0), linked together by a central stalk and a peripheral stalk (PubMed:27373333). The central stalk, also called rotor shaft, is often seen as part of F(1) (PubMed:27373333). The peripheral stalk is seen as part of F(0) (PubMed:27373333). F(0) contains the membrane channel next to the rotor (PubMed:27373333). F-type ATP synthases form dimers but each monomer functions independently in ATP generation (PubMed:27373333). The dimer consists of 17 different polypeptides: ATP1 (subunit alpha, 3 molecules per monomer, part of F(1)), ATP2 (subunit beta, 3 copies per monomer, part of F(1)), ATP3 (subunit gamma, part of the central stalk), ATP4 (subunit b, part of the peripheral stalk), ATP5/OSCP (subunit 5/OSCP, part of the peripheral stalk), ATP6 (subunit a, part of the peripheral stalk), ATP7 (subunit d, part of the peripheral stalk), ATP8 (subunit 8, part of the peripheral stalk), OLI1 (subunit c, part of the rotor, 10 molecules per monomer), ATP14 (subunit h, part of the peripheral stalk), ATP15 (subunit epsilon, part of the central stalk), ATP16 (subunit delta, part of the central stalk), ATP17 (subunit f, part of the peripheral stalk), ATP18 (subunit i/j, part of the peripheral stalk), ATP19 (subunit k, dimer-specific, at interface between monomers), ATP20 (subunit g, at interface between monomers), TIM11 (subunit e, at interface between monomers) (PubMed:25759169, PubMed:27373333).</text>
</comment>
<comment type="subcellular location">
    <subcellularLocation>
        <location evidence="6">Mitochondrion inner membrane</location>
    </subcellularLocation>
    <text evidence="6">The F-type ATP synthase complex is anchored in the mitochondrial inner membrane via the F(0) domain with the F(1) domain and the peripheral stalk extending into the mitochondrial matrix.</text>
</comment>
<comment type="mass spectrometry"/>
<comment type="similarity">
    <text evidence="5">Belongs to the ATPase F chain family.</text>
</comment>
<accession>Q6C9E6</accession>
<feature type="transit peptide" description="Mitochondrion" evidence="2">
    <location>
        <begin position="1"/>
        <end position="6"/>
    </location>
</feature>
<feature type="chain" id="PRO_0000445322" description="ATP synthase subunit f, mitochondrial" evidence="5">
    <location>
        <begin position="7"/>
        <end position="103"/>
    </location>
</feature>
<protein>
    <recommendedName>
        <fullName evidence="1">ATP synthase subunit f, mitochondrial</fullName>
    </recommendedName>
</protein>
<proteinExistence type="evidence at protein level"/>
<gene>
    <name evidence="1" type="primary">ATP17</name>
    <name evidence="7" type="ordered locus">YALI0_D11814g</name>
</gene>
<keyword id="KW-0066">ATP synthesis</keyword>
<keyword id="KW-0138">CF(0)</keyword>
<keyword id="KW-0375">Hydrogen ion transport</keyword>
<keyword id="KW-0406">Ion transport</keyword>
<keyword id="KW-0472">Membrane</keyword>
<keyword id="KW-0496">Mitochondrion</keyword>
<keyword id="KW-0999">Mitochondrion inner membrane</keyword>
<keyword id="KW-1185">Reference proteome</keyword>
<keyword id="KW-0809">Transit peptide</keyword>
<keyword id="KW-0813">Transport</keyword>
<evidence type="ECO:0000250" key="1">
    <source>
        <dbReference type="UniProtKB" id="Q06405"/>
    </source>
</evidence>
<evidence type="ECO:0000269" key="2">
    <source>
    </source>
</evidence>
<evidence type="ECO:0000269" key="3">
    <source>
    </source>
</evidence>
<evidence type="ECO:0000303" key="4">
    <source>
    </source>
</evidence>
<evidence type="ECO:0000305" key="5"/>
<evidence type="ECO:0000305" key="6">
    <source>
    </source>
</evidence>
<evidence type="ECO:0000312" key="7">
    <source>
        <dbReference type="EMBL" id="CAG80904.1"/>
    </source>
</evidence>
<evidence type="ECO:0000312" key="8">
    <source>
        <dbReference type="Proteomes" id="UP000001300"/>
    </source>
</evidence>
<reference evidence="8" key="1">
    <citation type="journal article" date="2004" name="Nature">
        <title>Genome evolution in yeasts.</title>
        <authorList>
            <person name="Dujon B."/>
            <person name="Sherman D."/>
            <person name="Fischer G."/>
            <person name="Durrens P."/>
            <person name="Casaregola S."/>
            <person name="Lafontaine I."/>
            <person name="de Montigny J."/>
            <person name="Marck C."/>
            <person name="Neuveglise C."/>
            <person name="Talla E."/>
            <person name="Goffard N."/>
            <person name="Frangeul L."/>
            <person name="Aigle M."/>
            <person name="Anthouard V."/>
            <person name="Babour A."/>
            <person name="Barbe V."/>
            <person name="Barnay S."/>
            <person name="Blanchin S."/>
            <person name="Beckerich J.-M."/>
            <person name="Beyne E."/>
            <person name="Bleykasten C."/>
            <person name="Boisrame A."/>
            <person name="Boyer J."/>
            <person name="Cattolico L."/>
            <person name="Confanioleri F."/>
            <person name="de Daruvar A."/>
            <person name="Despons L."/>
            <person name="Fabre E."/>
            <person name="Fairhead C."/>
            <person name="Ferry-Dumazet H."/>
            <person name="Groppi A."/>
            <person name="Hantraye F."/>
            <person name="Hennequin C."/>
            <person name="Jauniaux N."/>
            <person name="Joyet P."/>
            <person name="Kachouri R."/>
            <person name="Kerrest A."/>
            <person name="Koszul R."/>
            <person name="Lemaire M."/>
            <person name="Lesur I."/>
            <person name="Ma L."/>
            <person name="Muller H."/>
            <person name="Nicaud J.-M."/>
            <person name="Nikolski M."/>
            <person name="Oztas S."/>
            <person name="Ozier-Kalogeropoulos O."/>
            <person name="Pellenz S."/>
            <person name="Potier S."/>
            <person name="Richard G.-F."/>
            <person name="Straub M.-L."/>
            <person name="Suleau A."/>
            <person name="Swennen D."/>
            <person name="Tekaia F."/>
            <person name="Wesolowski-Louvel M."/>
            <person name="Westhof E."/>
            <person name="Wirth B."/>
            <person name="Zeniou-Meyer M."/>
            <person name="Zivanovic Y."/>
            <person name="Bolotin-Fukuhara M."/>
            <person name="Thierry A."/>
            <person name="Bouchier C."/>
            <person name="Caudron B."/>
            <person name="Scarpelli C."/>
            <person name="Gaillardin C."/>
            <person name="Weissenbach J."/>
            <person name="Wincker P."/>
            <person name="Souciet J.-L."/>
        </authorList>
    </citation>
    <scope>NUCLEOTIDE SEQUENCE [LARGE SCALE GENOMIC DNA]</scope>
    <source>
        <strain>CLIB 122 / E 150</strain>
    </source>
</reference>
<reference evidence="5" key="2">
    <citation type="journal article" date="2015" name="Biochem. J.">
        <title>The purification and characterization of ATP synthase complexes from the mitochondria of four fungal species.</title>
        <authorList>
            <person name="Liu S."/>
            <person name="Charlesworth T.J."/>
            <person name="Bason J.V."/>
            <person name="Montgomery M.G."/>
            <person name="Harbour M.E."/>
            <person name="Fearnley I.M."/>
            <person name="Walker J.E."/>
        </authorList>
    </citation>
    <scope>IDENTIFICATION IN ATP SYNTHASE COMPLEX</scope>
    <scope>FUNCTION OF ATP SYNTHASE COMPLEX</scope>
    <scope>SUBUNIT</scope>
    <scope>SUBCELLULAR LOCATION</scope>
    <scope>MASS SPECTROMETRY</scope>
    <scope>IDENTIFICATION BY MASS SPECTROMETRY</scope>
    <source>
        <strain evidence="4">CLIB 122 / E 150</strain>
    </source>
</reference>
<reference evidence="5" key="3">
    <citation type="journal article" date="2016" name="Mol. Cell">
        <title>Structure of a Complete ATP Synthase Dimer Reveals the Molecular Basis of Inner Mitochondrial Membrane Morphology.</title>
        <authorList>
            <person name="Hahn A."/>
            <person name="Parey K."/>
            <person name="Bublitz M."/>
            <person name="Mills D.J."/>
            <person name="Zickermann V."/>
            <person name="Vonck J."/>
            <person name="Kuehlbrandt W."/>
            <person name="Meier T."/>
        </authorList>
    </citation>
    <scope>STRUCTURE BY ELECTRON MICROSCOPY (7.7 ANGSTROMS) OF DIMERIC ATP SYNTHASE COMPLEX</scope>
    <scope>FUNCTION</scope>
    <scope>SUBUNIT</scope>
    <scope>SUBCELLULAR LOCATION</scope>
    <scope>MEMBRANE TOPOLOGY</scope>
    <scope>IDENTIFICATION BY MASS SPECTROMETRY</scope>
</reference>
<name>ATPK_YARLI</name>
<dbReference type="EMBL" id="CR382130">
    <property type="protein sequence ID" value="CAG80904.1"/>
    <property type="molecule type" value="Genomic_DNA"/>
</dbReference>
<dbReference type="RefSeq" id="XP_502716.1">
    <property type="nucleotide sequence ID" value="XM_502716.1"/>
</dbReference>
<dbReference type="SMR" id="Q6C9E6"/>
<dbReference type="FunCoup" id="Q6C9E6">
    <property type="interactions" value="98"/>
</dbReference>
<dbReference type="STRING" id="284591.Q6C9E6"/>
<dbReference type="EnsemblFungi" id="CAG80904">
    <property type="protein sequence ID" value="CAG80904"/>
    <property type="gene ID" value="YALI0_D11814g"/>
</dbReference>
<dbReference type="KEGG" id="yli:2910601"/>
<dbReference type="VEuPathDB" id="FungiDB:YALI0_D11814g"/>
<dbReference type="HOGENOM" id="CLU_152700_1_0_1"/>
<dbReference type="InParanoid" id="Q6C9E6"/>
<dbReference type="OMA" id="TIDYQMH"/>
<dbReference type="OrthoDB" id="68925at4891"/>
<dbReference type="Proteomes" id="UP000001300">
    <property type="component" value="Chromosome D"/>
</dbReference>
<dbReference type="GO" id="GO:0005743">
    <property type="term" value="C:mitochondrial inner membrane"/>
    <property type="evidence" value="ECO:0007669"/>
    <property type="project" value="UniProtKB-SubCell"/>
</dbReference>
<dbReference type="GO" id="GO:0045259">
    <property type="term" value="C:proton-transporting ATP synthase complex"/>
    <property type="evidence" value="ECO:0007669"/>
    <property type="project" value="UniProtKB-KW"/>
</dbReference>
<dbReference type="GO" id="GO:0016887">
    <property type="term" value="F:ATP hydrolysis activity"/>
    <property type="evidence" value="ECO:0007669"/>
    <property type="project" value="EnsemblFungi"/>
</dbReference>
<dbReference type="GO" id="GO:0046933">
    <property type="term" value="F:proton-transporting ATP synthase activity, rotational mechanism"/>
    <property type="evidence" value="ECO:0007669"/>
    <property type="project" value="EnsemblFungi"/>
</dbReference>
<dbReference type="GO" id="GO:0015986">
    <property type="term" value="P:proton motive force-driven ATP synthesis"/>
    <property type="evidence" value="ECO:0000318"/>
    <property type="project" value="GO_Central"/>
</dbReference>
<dbReference type="InterPro" id="IPR019727">
    <property type="entry name" value="ATP_synth_F0_fsu_mt_fun"/>
</dbReference>
<dbReference type="PANTHER" id="PTHR28161">
    <property type="entry name" value="ATP SYNTHASE SUBUNIT F, MITOCHONDRIAL"/>
    <property type="match status" value="1"/>
</dbReference>
<dbReference type="PANTHER" id="PTHR28161:SF1">
    <property type="entry name" value="ATP SYNTHASE SUBUNIT F, MITOCHONDRIAL"/>
    <property type="match status" value="1"/>
</dbReference>
<dbReference type="Pfam" id="PF10791">
    <property type="entry name" value="F1F0-ATPsyn_F"/>
    <property type="match status" value="1"/>
</dbReference>